<gene>
    <name evidence="1" type="primary">nadE</name>
    <name type="ordered locus">slr1691</name>
</gene>
<name>NADE_SYNY3</name>
<dbReference type="EC" id="6.3.5.1" evidence="1"/>
<dbReference type="EMBL" id="BA000022">
    <property type="protein sequence ID" value="BAA18386.1"/>
    <property type="molecule type" value="Genomic_DNA"/>
</dbReference>
<dbReference type="PIR" id="S75927">
    <property type="entry name" value="S75927"/>
</dbReference>
<dbReference type="SMR" id="P74292"/>
<dbReference type="IntAct" id="P74292">
    <property type="interactions" value="1"/>
</dbReference>
<dbReference type="STRING" id="1148.gene:10499262"/>
<dbReference type="PaxDb" id="1148-1653472"/>
<dbReference type="EnsemblBacteria" id="BAA18386">
    <property type="protein sequence ID" value="BAA18386"/>
    <property type="gene ID" value="BAA18386"/>
</dbReference>
<dbReference type="KEGG" id="syn:slr1691"/>
<dbReference type="eggNOG" id="COG0171">
    <property type="taxonomic scope" value="Bacteria"/>
</dbReference>
<dbReference type="eggNOG" id="COG0388">
    <property type="taxonomic scope" value="Bacteria"/>
</dbReference>
<dbReference type="InParanoid" id="P74292"/>
<dbReference type="PhylomeDB" id="P74292"/>
<dbReference type="UniPathway" id="UPA00253">
    <property type="reaction ID" value="UER00334"/>
</dbReference>
<dbReference type="Proteomes" id="UP000001425">
    <property type="component" value="Chromosome"/>
</dbReference>
<dbReference type="GO" id="GO:0005737">
    <property type="term" value="C:cytoplasm"/>
    <property type="evidence" value="ECO:0000318"/>
    <property type="project" value="GO_Central"/>
</dbReference>
<dbReference type="GO" id="GO:0005524">
    <property type="term" value="F:ATP binding"/>
    <property type="evidence" value="ECO:0007669"/>
    <property type="project" value="UniProtKB-UniRule"/>
</dbReference>
<dbReference type="GO" id="GO:0004359">
    <property type="term" value="F:glutaminase activity"/>
    <property type="evidence" value="ECO:0007669"/>
    <property type="project" value="InterPro"/>
</dbReference>
<dbReference type="GO" id="GO:0003952">
    <property type="term" value="F:NAD+ synthase (glutamine-hydrolyzing) activity"/>
    <property type="evidence" value="ECO:0007669"/>
    <property type="project" value="UniProtKB-EC"/>
</dbReference>
<dbReference type="GO" id="GO:0008795">
    <property type="term" value="F:NAD+ synthase activity"/>
    <property type="evidence" value="ECO:0007669"/>
    <property type="project" value="UniProtKB-UniRule"/>
</dbReference>
<dbReference type="GO" id="GO:0009435">
    <property type="term" value="P:NAD biosynthetic process"/>
    <property type="evidence" value="ECO:0000318"/>
    <property type="project" value="GO_Central"/>
</dbReference>
<dbReference type="CDD" id="cd07570">
    <property type="entry name" value="GAT_Gln-NAD-synth"/>
    <property type="match status" value="1"/>
</dbReference>
<dbReference type="CDD" id="cd00553">
    <property type="entry name" value="NAD_synthase"/>
    <property type="match status" value="1"/>
</dbReference>
<dbReference type="FunFam" id="3.40.50.620:FF:000106">
    <property type="entry name" value="Glutamine-dependent NAD(+) synthetase"/>
    <property type="match status" value="1"/>
</dbReference>
<dbReference type="Gene3D" id="3.60.110.10">
    <property type="entry name" value="Carbon-nitrogen hydrolase"/>
    <property type="match status" value="1"/>
</dbReference>
<dbReference type="Gene3D" id="3.40.50.620">
    <property type="entry name" value="HUPs"/>
    <property type="match status" value="1"/>
</dbReference>
<dbReference type="HAMAP" id="MF_02090">
    <property type="entry name" value="NadE_glutamine_dep"/>
    <property type="match status" value="1"/>
</dbReference>
<dbReference type="InterPro" id="IPR003010">
    <property type="entry name" value="C-N_Hydrolase"/>
</dbReference>
<dbReference type="InterPro" id="IPR036526">
    <property type="entry name" value="C-N_Hydrolase_sf"/>
</dbReference>
<dbReference type="InterPro" id="IPR014445">
    <property type="entry name" value="Gln-dep_NAD_synthase"/>
</dbReference>
<dbReference type="InterPro" id="IPR022310">
    <property type="entry name" value="NAD/GMP_synthase"/>
</dbReference>
<dbReference type="InterPro" id="IPR003694">
    <property type="entry name" value="NAD_synthase"/>
</dbReference>
<dbReference type="InterPro" id="IPR014729">
    <property type="entry name" value="Rossmann-like_a/b/a_fold"/>
</dbReference>
<dbReference type="NCBIfam" id="TIGR00552">
    <property type="entry name" value="nadE"/>
    <property type="match status" value="1"/>
</dbReference>
<dbReference type="NCBIfam" id="NF010588">
    <property type="entry name" value="PRK13981.1"/>
    <property type="match status" value="1"/>
</dbReference>
<dbReference type="PANTHER" id="PTHR23090:SF9">
    <property type="entry name" value="GLUTAMINE-DEPENDENT NAD(+) SYNTHETASE"/>
    <property type="match status" value="1"/>
</dbReference>
<dbReference type="PANTHER" id="PTHR23090">
    <property type="entry name" value="NH 3 /GLUTAMINE-DEPENDENT NAD + SYNTHETASE"/>
    <property type="match status" value="1"/>
</dbReference>
<dbReference type="Pfam" id="PF00795">
    <property type="entry name" value="CN_hydrolase"/>
    <property type="match status" value="1"/>
</dbReference>
<dbReference type="Pfam" id="PF02540">
    <property type="entry name" value="NAD_synthase"/>
    <property type="match status" value="1"/>
</dbReference>
<dbReference type="PIRSF" id="PIRSF006630">
    <property type="entry name" value="NADS_GAT"/>
    <property type="match status" value="1"/>
</dbReference>
<dbReference type="SUPFAM" id="SSF52402">
    <property type="entry name" value="Adenine nucleotide alpha hydrolases-like"/>
    <property type="match status" value="1"/>
</dbReference>
<dbReference type="SUPFAM" id="SSF56317">
    <property type="entry name" value="Carbon-nitrogen hydrolase"/>
    <property type="match status" value="1"/>
</dbReference>
<dbReference type="PROSITE" id="PS50263">
    <property type="entry name" value="CN_HYDROLASE"/>
    <property type="match status" value="1"/>
</dbReference>
<evidence type="ECO:0000255" key="1">
    <source>
        <dbReference type="HAMAP-Rule" id="MF_02090"/>
    </source>
</evidence>
<evidence type="ECO:0000255" key="2">
    <source>
        <dbReference type="PROSITE-ProRule" id="PRU00054"/>
    </source>
</evidence>
<evidence type="ECO:0000305" key="3"/>
<protein>
    <recommendedName>
        <fullName evidence="1">Glutamine-dependent NAD(+) synthetase</fullName>
        <ecNumber evidence="1">6.3.5.1</ecNumber>
    </recommendedName>
    <alternativeName>
        <fullName evidence="1">NAD(+) synthase [glutamine-hydrolyzing]</fullName>
    </alternativeName>
</protein>
<accession>P74292</accession>
<organism>
    <name type="scientific">Synechocystis sp. (strain ATCC 27184 / PCC 6803 / Kazusa)</name>
    <dbReference type="NCBI Taxonomy" id="1111708"/>
    <lineage>
        <taxon>Bacteria</taxon>
        <taxon>Bacillati</taxon>
        <taxon>Cyanobacteriota</taxon>
        <taxon>Cyanophyceae</taxon>
        <taxon>Synechococcales</taxon>
        <taxon>Merismopediaceae</taxon>
        <taxon>Synechocystis</taxon>
    </lineage>
</organism>
<feature type="chain" id="PRO_0000152244" description="Glutamine-dependent NAD(+) synthetase">
    <location>
        <begin position="1"/>
        <end position="558"/>
    </location>
</feature>
<feature type="domain" description="CN hydrolase" evidence="2">
    <location>
        <begin position="2"/>
        <end position="262"/>
    </location>
</feature>
<feature type="region of interest" description="Ligase">
    <location>
        <begin position="284"/>
        <end position="558"/>
    </location>
</feature>
<feature type="active site" description="Proton acceptor; for glutaminase activity" evidence="1">
    <location>
        <position position="42"/>
    </location>
</feature>
<feature type="active site" description="For glutaminase activity" evidence="1">
    <location>
        <position position="117"/>
    </location>
</feature>
<feature type="active site" description="Nucleophile; for glutaminase activity" evidence="1">
    <location>
        <position position="153"/>
    </location>
</feature>
<feature type="binding site" evidence="1">
    <location>
        <position position="123"/>
    </location>
    <ligand>
        <name>L-glutamine</name>
        <dbReference type="ChEBI" id="CHEBI:58359"/>
    </ligand>
</feature>
<feature type="binding site" evidence="1">
    <location>
        <position position="190"/>
    </location>
    <ligand>
        <name>L-glutamine</name>
        <dbReference type="ChEBI" id="CHEBI:58359"/>
    </ligand>
</feature>
<feature type="binding site" evidence="1">
    <location>
        <position position="196"/>
    </location>
    <ligand>
        <name>L-glutamine</name>
        <dbReference type="ChEBI" id="CHEBI:58359"/>
    </ligand>
</feature>
<feature type="binding site" evidence="1">
    <location>
        <begin position="304"/>
        <end position="311"/>
    </location>
    <ligand>
        <name>ATP</name>
        <dbReference type="ChEBI" id="CHEBI:30616"/>
    </ligand>
</feature>
<feature type="binding site" evidence="1">
    <location>
        <position position="387"/>
    </location>
    <ligand>
        <name>deamido-NAD(+)</name>
        <dbReference type="ChEBI" id="CHEBI:58437"/>
    </ligand>
</feature>
<feature type="binding site" evidence="1">
    <location>
        <position position="411"/>
    </location>
    <ligand>
        <name>ATP</name>
        <dbReference type="ChEBI" id="CHEBI:30616"/>
    </ligand>
</feature>
<feature type="binding site" evidence="1">
    <location>
        <position position="416"/>
    </location>
    <ligand>
        <name>deamido-NAD(+)</name>
        <dbReference type="ChEBI" id="CHEBI:58437"/>
    </ligand>
</feature>
<feature type="binding site" evidence="1">
    <location>
        <position position="526"/>
    </location>
    <ligand>
        <name>deamido-NAD(+)</name>
        <dbReference type="ChEBI" id="CHEBI:58437"/>
    </ligand>
</feature>
<proteinExistence type="inferred from homology"/>
<sequence length="558" mass="61076">MFTIALAQLNPTIGAIAENAEKIVTAALQAQARGADLLLTPELALCGYPPKDLLLNPSFVEQLEEELQWLAEKMPPSIAILVGTVTPHHQAERQGQKKLWNSAVLIEQGQIKQWFHKCLLPTYDVFDEDRYFASAAKSEYFIYKNVKIGVTICEDLWNDEAFWGQKFYQVNPLMDLIDQGVNLVVNLSASPYSCGKHYLRESLISHSAKRFNVPLIYVNQVGGNDDLIFDGGSFAVNSQGKIIGRSPLFQEDLALLSYDLSSGELTGQKLASLPMVDTEELWQALVLGVGDYLHKCGFSKAILGLSGGIDSSLVAAIAVEALGKENVLGILMPSPYSSDHSIQDALALAKNLGMNTQTIPIGPIMATYDQALVPLFQDAPFGLAEENLQSRIRGNLLMAIANKFGHLLLSTGNKSELAVGYCTLYGDMNGGLAAIADVPKTQVFELCRWLNREQTIIPPSVLTKPPSAELKPGQVDTDSLPPYDVLDGILGRLVEKHQSPQEIINAGFEREVVLKICQLVQKSEFKRRQAAPGLKVTDRAFGSGWRMPIAQAFHPQGS</sequence>
<comment type="function">
    <text evidence="1">Catalyzes the ATP-dependent amidation of deamido-NAD to form NAD. Uses L-glutamine as a nitrogen source.</text>
</comment>
<comment type="catalytic activity">
    <reaction evidence="1">
        <text>deamido-NAD(+) + L-glutamine + ATP + H2O = L-glutamate + AMP + diphosphate + NAD(+) + H(+)</text>
        <dbReference type="Rhea" id="RHEA:24384"/>
        <dbReference type="ChEBI" id="CHEBI:15377"/>
        <dbReference type="ChEBI" id="CHEBI:15378"/>
        <dbReference type="ChEBI" id="CHEBI:29985"/>
        <dbReference type="ChEBI" id="CHEBI:30616"/>
        <dbReference type="ChEBI" id="CHEBI:33019"/>
        <dbReference type="ChEBI" id="CHEBI:57540"/>
        <dbReference type="ChEBI" id="CHEBI:58359"/>
        <dbReference type="ChEBI" id="CHEBI:58437"/>
        <dbReference type="ChEBI" id="CHEBI:456215"/>
        <dbReference type="EC" id="6.3.5.1"/>
    </reaction>
</comment>
<comment type="pathway">
    <text evidence="1">Cofactor biosynthesis; NAD(+) biosynthesis; NAD(+) from deamido-NAD(+) (L-Gln route): step 1/1.</text>
</comment>
<comment type="similarity">
    <text evidence="1 3">In the C-terminal section; belongs to the NAD synthetase family.</text>
</comment>
<keyword id="KW-0067">ATP-binding</keyword>
<keyword id="KW-0436">Ligase</keyword>
<keyword id="KW-0520">NAD</keyword>
<keyword id="KW-0547">Nucleotide-binding</keyword>
<keyword id="KW-1185">Reference proteome</keyword>
<reference key="1">
    <citation type="journal article" date="1996" name="DNA Res.">
        <title>Sequence analysis of the genome of the unicellular cyanobacterium Synechocystis sp. strain PCC6803. II. Sequence determination of the entire genome and assignment of potential protein-coding regions.</title>
        <authorList>
            <person name="Kaneko T."/>
            <person name="Sato S."/>
            <person name="Kotani H."/>
            <person name="Tanaka A."/>
            <person name="Asamizu E."/>
            <person name="Nakamura Y."/>
            <person name="Miyajima N."/>
            <person name="Hirosawa M."/>
            <person name="Sugiura M."/>
            <person name="Sasamoto S."/>
            <person name="Kimura T."/>
            <person name="Hosouchi T."/>
            <person name="Matsuno A."/>
            <person name="Muraki A."/>
            <person name="Nakazaki N."/>
            <person name="Naruo K."/>
            <person name="Okumura S."/>
            <person name="Shimpo S."/>
            <person name="Takeuchi C."/>
            <person name="Wada T."/>
            <person name="Watanabe A."/>
            <person name="Yamada M."/>
            <person name="Yasuda M."/>
            <person name="Tabata S."/>
        </authorList>
    </citation>
    <scope>NUCLEOTIDE SEQUENCE [LARGE SCALE GENOMIC DNA]</scope>
    <source>
        <strain>ATCC 27184 / PCC 6803 / Kazusa</strain>
    </source>
</reference>